<organism>
    <name type="scientific">Staphylococcus epidermidis (strain ATCC 35984 / DSM 28319 / BCRC 17069 / CCUG 31568 / BM 3577 / RP62A)</name>
    <dbReference type="NCBI Taxonomy" id="176279"/>
    <lineage>
        <taxon>Bacteria</taxon>
        <taxon>Bacillati</taxon>
        <taxon>Bacillota</taxon>
        <taxon>Bacilli</taxon>
        <taxon>Bacillales</taxon>
        <taxon>Staphylococcaceae</taxon>
        <taxon>Staphylococcus</taxon>
    </lineage>
</organism>
<keyword id="KW-1185">Reference proteome</keyword>
<gene>
    <name type="ordered locus">SERP0525</name>
</gene>
<sequence>MFPLVEFCISNMAKGSDVVFEKLENDPNIDVLEYGCLQNCGLCASSLYALVDGDIVEGNTPDDLLKNIYQHIEDNDITNLL</sequence>
<comment type="similarity">
    <text evidence="1">Belongs to the UPF0349 family.</text>
</comment>
<reference key="1">
    <citation type="journal article" date="2005" name="J. Bacteriol.">
        <title>Insights on evolution of virulence and resistance from the complete genome analysis of an early methicillin-resistant Staphylococcus aureus strain and a biofilm-producing methicillin-resistant Staphylococcus epidermidis strain.</title>
        <authorList>
            <person name="Gill S.R."/>
            <person name="Fouts D.E."/>
            <person name="Archer G.L."/>
            <person name="Mongodin E.F."/>
            <person name="DeBoy R.T."/>
            <person name="Ravel J."/>
            <person name="Paulsen I.T."/>
            <person name="Kolonay J.F."/>
            <person name="Brinkac L.M."/>
            <person name="Beanan M.J."/>
            <person name="Dodson R.J."/>
            <person name="Daugherty S.C."/>
            <person name="Madupu R."/>
            <person name="Angiuoli S.V."/>
            <person name="Durkin A.S."/>
            <person name="Haft D.H."/>
            <person name="Vamathevan J.J."/>
            <person name="Khouri H."/>
            <person name="Utterback T.R."/>
            <person name="Lee C."/>
            <person name="Dimitrov G."/>
            <person name="Jiang L."/>
            <person name="Qin H."/>
            <person name="Weidman J."/>
            <person name="Tran K."/>
            <person name="Kang K.H."/>
            <person name="Hance I.R."/>
            <person name="Nelson K.E."/>
            <person name="Fraser C.M."/>
        </authorList>
    </citation>
    <scope>NUCLEOTIDE SEQUENCE [LARGE SCALE GENOMIC DNA]</scope>
    <source>
        <strain>ATCC 35984 / DSM 28319 / BCRC 17069 / CCUG 31568 / BM 3577 / RP62A</strain>
    </source>
</reference>
<accession>Q5HQM3</accession>
<proteinExistence type="inferred from homology"/>
<name>Y525_STAEQ</name>
<feature type="chain" id="PRO_0000165901" description="UPF0349 protein SERP0525">
    <location>
        <begin position="1"/>
        <end position="81"/>
    </location>
</feature>
<evidence type="ECO:0000255" key="1">
    <source>
        <dbReference type="HAMAP-Rule" id="MF_01542"/>
    </source>
</evidence>
<protein>
    <recommendedName>
        <fullName evidence="1">UPF0349 protein SERP0525</fullName>
    </recommendedName>
</protein>
<dbReference type="EMBL" id="CP000029">
    <property type="protein sequence ID" value="AAW53914.1"/>
    <property type="molecule type" value="Genomic_DNA"/>
</dbReference>
<dbReference type="RefSeq" id="WP_001831896.1">
    <property type="nucleotide sequence ID" value="NC_002976.3"/>
</dbReference>
<dbReference type="SMR" id="Q5HQM3"/>
<dbReference type="STRING" id="176279.SERP0525"/>
<dbReference type="KEGG" id="ser:SERP0525"/>
<dbReference type="eggNOG" id="COG4844">
    <property type="taxonomic scope" value="Bacteria"/>
</dbReference>
<dbReference type="HOGENOM" id="CLU_182025_0_0_9"/>
<dbReference type="Proteomes" id="UP000000531">
    <property type="component" value="Chromosome"/>
</dbReference>
<dbReference type="HAMAP" id="MF_01542">
    <property type="entry name" value="UPF0349"/>
    <property type="match status" value="1"/>
</dbReference>
<dbReference type="InterPro" id="IPR009910">
    <property type="entry name" value="DUF1450"/>
</dbReference>
<dbReference type="InterPro" id="IPR022916">
    <property type="entry name" value="UPF0349"/>
</dbReference>
<dbReference type="NCBIfam" id="NF010190">
    <property type="entry name" value="PRK13669.1"/>
    <property type="match status" value="1"/>
</dbReference>
<dbReference type="Pfam" id="PF07293">
    <property type="entry name" value="DUF1450"/>
    <property type="match status" value="1"/>
</dbReference>